<dbReference type="EC" id="2.5.1.19" evidence="1"/>
<dbReference type="EMBL" id="CP001056">
    <property type="protein sequence ID" value="ACD25121.1"/>
    <property type="molecule type" value="Genomic_DNA"/>
</dbReference>
<dbReference type="SMR" id="B2TQ51"/>
<dbReference type="KEGG" id="cbk:CLL_A3142"/>
<dbReference type="PATRIC" id="fig|935198.13.peg.3106"/>
<dbReference type="HOGENOM" id="CLU_024321_0_0_9"/>
<dbReference type="UniPathway" id="UPA00053">
    <property type="reaction ID" value="UER00089"/>
</dbReference>
<dbReference type="Proteomes" id="UP000001195">
    <property type="component" value="Chromosome"/>
</dbReference>
<dbReference type="GO" id="GO:0005737">
    <property type="term" value="C:cytoplasm"/>
    <property type="evidence" value="ECO:0007669"/>
    <property type="project" value="UniProtKB-SubCell"/>
</dbReference>
<dbReference type="GO" id="GO:0003866">
    <property type="term" value="F:3-phosphoshikimate 1-carboxyvinyltransferase activity"/>
    <property type="evidence" value="ECO:0007669"/>
    <property type="project" value="UniProtKB-UniRule"/>
</dbReference>
<dbReference type="GO" id="GO:0008652">
    <property type="term" value="P:amino acid biosynthetic process"/>
    <property type="evidence" value="ECO:0007669"/>
    <property type="project" value="UniProtKB-KW"/>
</dbReference>
<dbReference type="GO" id="GO:0009073">
    <property type="term" value="P:aromatic amino acid family biosynthetic process"/>
    <property type="evidence" value="ECO:0007669"/>
    <property type="project" value="UniProtKB-KW"/>
</dbReference>
<dbReference type="GO" id="GO:0009423">
    <property type="term" value="P:chorismate biosynthetic process"/>
    <property type="evidence" value="ECO:0007669"/>
    <property type="project" value="UniProtKB-UniRule"/>
</dbReference>
<dbReference type="CDD" id="cd01556">
    <property type="entry name" value="EPSP_synthase"/>
    <property type="match status" value="1"/>
</dbReference>
<dbReference type="Gene3D" id="3.65.10.10">
    <property type="entry name" value="Enolpyruvate transferase domain"/>
    <property type="match status" value="2"/>
</dbReference>
<dbReference type="HAMAP" id="MF_00210">
    <property type="entry name" value="EPSP_synth"/>
    <property type="match status" value="1"/>
</dbReference>
<dbReference type="InterPro" id="IPR001986">
    <property type="entry name" value="Enolpyruvate_Tfrase_dom"/>
</dbReference>
<dbReference type="InterPro" id="IPR036968">
    <property type="entry name" value="Enolpyruvate_Tfrase_sf"/>
</dbReference>
<dbReference type="InterPro" id="IPR006264">
    <property type="entry name" value="EPSP_synthase"/>
</dbReference>
<dbReference type="InterPro" id="IPR023193">
    <property type="entry name" value="EPSP_synthase_CS"/>
</dbReference>
<dbReference type="InterPro" id="IPR013792">
    <property type="entry name" value="RNA3'P_cycl/enolpyr_Trfase_a/b"/>
</dbReference>
<dbReference type="NCBIfam" id="TIGR01356">
    <property type="entry name" value="aroA"/>
    <property type="match status" value="1"/>
</dbReference>
<dbReference type="PANTHER" id="PTHR21090">
    <property type="entry name" value="AROM/DEHYDROQUINATE SYNTHASE"/>
    <property type="match status" value="1"/>
</dbReference>
<dbReference type="PANTHER" id="PTHR21090:SF5">
    <property type="entry name" value="PENTAFUNCTIONAL AROM POLYPEPTIDE"/>
    <property type="match status" value="1"/>
</dbReference>
<dbReference type="Pfam" id="PF00275">
    <property type="entry name" value="EPSP_synthase"/>
    <property type="match status" value="1"/>
</dbReference>
<dbReference type="PIRSF" id="PIRSF000505">
    <property type="entry name" value="EPSPS"/>
    <property type="match status" value="1"/>
</dbReference>
<dbReference type="SUPFAM" id="SSF55205">
    <property type="entry name" value="EPT/RTPC-like"/>
    <property type="match status" value="1"/>
</dbReference>
<dbReference type="PROSITE" id="PS00885">
    <property type="entry name" value="EPSP_SYNTHASE_2"/>
    <property type="match status" value="1"/>
</dbReference>
<name>AROA_CLOBB</name>
<sequence length="433" mass="48233">MGTFKIYPGKLKGEVKTPPSKSMAHRGVICAALGDGISKIRNINYSDDIIATINAMRSLGAIITKEDEYLHVIGIKSEKCKKNIELNRTIDCNESGSTLRFLVPISCIFEGSSRFIGRGNLGKRPLDTYYEIFDNQGIKHSYKKGKLDLRIEGILKCGEFKLRGDISSQFISGMLFTLPLLEGDSKVIITTDLESKGYIDLTLSAMSDFGIEIINNNYREFIIKGNQTYKSRNYRIEGDYSQAAFFLVADALKSEVFINDLNLESLQGDKEVIEILERMNMKIKNIDNGLLGIQRENLGSTIIDGSQCPDIIPVISLAASLCNGRTEIINVGRLRIKECDRLSAVASELNKLGAHIIEKEDSLIIDGVKTLKGGVKVWSHKDHRIAMMLAIASTVCMEPIILEDYECISKSYPAFFDDFKALGGNFHEWNLGE</sequence>
<keyword id="KW-0028">Amino-acid biosynthesis</keyword>
<keyword id="KW-0057">Aromatic amino acid biosynthesis</keyword>
<keyword id="KW-0963">Cytoplasm</keyword>
<keyword id="KW-0808">Transferase</keyword>
<proteinExistence type="inferred from homology"/>
<feature type="chain" id="PRO_1000099687" description="3-phosphoshikimate 1-carboxyvinyltransferase">
    <location>
        <begin position="1"/>
        <end position="433"/>
    </location>
</feature>
<feature type="active site" description="Proton acceptor" evidence="1">
    <location>
        <position position="310"/>
    </location>
</feature>
<feature type="binding site" evidence="1">
    <location>
        <position position="21"/>
    </location>
    <ligand>
        <name>3-phosphoshikimate</name>
        <dbReference type="ChEBI" id="CHEBI:145989"/>
    </ligand>
</feature>
<feature type="binding site" evidence="1">
    <location>
        <position position="21"/>
    </location>
    <ligand>
        <name>phosphoenolpyruvate</name>
        <dbReference type="ChEBI" id="CHEBI:58702"/>
    </ligand>
</feature>
<feature type="binding site" evidence="1">
    <location>
        <position position="22"/>
    </location>
    <ligand>
        <name>3-phosphoshikimate</name>
        <dbReference type="ChEBI" id="CHEBI:145989"/>
    </ligand>
</feature>
<feature type="binding site" evidence="1">
    <location>
        <position position="26"/>
    </location>
    <ligand>
        <name>3-phosphoshikimate</name>
        <dbReference type="ChEBI" id="CHEBI:145989"/>
    </ligand>
</feature>
<feature type="binding site" evidence="1">
    <location>
        <position position="96"/>
    </location>
    <ligand>
        <name>phosphoenolpyruvate</name>
        <dbReference type="ChEBI" id="CHEBI:58702"/>
    </ligand>
</feature>
<feature type="binding site" evidence="1">
    <location>
        <position position="124"/>
    </location>
    <ligand>
        <name>phosphoenolpyruvate</name>
        <dbReference type="ChEBI" id="CHEBI:58702"/>
    </ligand>
</feature>
<feature type="binding site" evidence="1">
    <location>
        <position position="167"/>
    </location>
    <ligand>
        <name>3-phosphoshikimate</name>
        <dbReference type="ChEBI" id="CHEBI:145989"/>
    </ligand>
</feature>
<feature type="binding site" evidence="1">
    <location>
        <position position="168"/>
    </location>
    <ligand>
        <name>3-phosphoshikimate</name>
        <dbReference type="ChEBI" id="CHEBI:145989"/>
    </ligand>
</feature>
<feature type="binding site" evidence="1">
    <location>
        <position position="169"/>
    </location>
    <ligand>
        <name>3-phosphoshikimate</name>
        <dbReference type="ChEBI" id="CHEBI:145989"/>
    </ligand>
</feature>
<feature type="binding site" evidence="1">
    <location>
        <position position="169"/>
    </location>
    <ligand>
        <name>phosphoenolpyruvate</name>
        <dbReference type="ChEBI" id="CHEBI:58702"/>
    </ligand>
</feature>
<feature type="binding site" evidence="1">
    <location>
        <position position="195"/>
    </location>
    <ligand>
        <name>3-phosphoshikimate</name>
        <dbReference type="ChEBI" id="CHEBI:145989"/>
    </ligand>
</feature>
<feature type="binding site" evidence="1">
    <location>
        <position position="310"/>
    </location>
    <ligand>
        <name>3-phosphoshikimate</name>
        <dbReference type="ChEBI" id="CHEBI:145989"/>
    </ligand>
</feature>
<feature type="binding site" evidence="1">
    <location>
        <position position="337"/>
    </location>
    <ligand>
        <name>3-phosphoshikimate</name>
        <dbReference type="ChEBI" id="CHEBI:145989"/>
    </ligand>
</feature>
<feature type="binding site" evidence="1">
    <location>
        <position position="341"/>
    </location>
    <ligand>
        <name>phosphoenolpyruvate</name>
        <dbReference type="ChEBI" id="CHEBI:58702"/>
    </ligand>
</feature>
<feature type="binding site" evidence="1">
    <location>
        <position position="384"/>
    </location>
    <ligand>
        <name>phosphoenolpyruvate</name>
        <dbReference type="ChEBI" id="CHEBI:58702"/>
    </ligand>
</feature>
<feature type="binding site" evidence="1">
    <location>
        <position position="410"/>
    </location>
    <ligand>
        <name>phosphoenolpyruvate</name>
        <dbReference type="ChEBI" id="CHEBI:58702"/>
    </ligand>
</feature>
<reference key="1">
    <citation type="submission" date="2008-04" db="EMBL/GenBank/DDBJ databases">
        <title>Complete sequence of Clostridium botulinum strain Eklund.</title>
        <authorList>
            <person name="Brinkac L.M."/>
            <person name="Brown J.L."/>
            <person name="Bruce D."/>
            <person name="Detter C."/>
            <person name="Munk C."/>
            <person name="Smith L.A."/>
            <person name="Smith T.J."/>
            <person name="Sutton G."/>
            <person name="Brettin T.S."/>
        </authorList>
    </citation>
    <scope>NUCLEOTIDE SEQUENCE [LARGE SCALE GENOMIC DNA]</scope>
    <source>
        <strain>Eklund 17B / Type B</strain>
    </source>
</reference>
<accession>B2TQ51</accession>
<organism>
    <name type="scientific">Clostridium botulinum (strain Eklund 17B / Type B)</name>
    <dbReference type="NCBI Taxonomy" id="935198"/>
    <lineage>
        <taxon>Bacteria</taxon>
        <taxon>Bacillati</taxon>
        <taxon>Bacillota</taxon>
        <taxon>Clostridia</taxon>
        <taxon>Eubacteriales</taxon>
        <taxon>Clostridiaceae</taxon>
        <taxon>Clostridium</taxon>
    </lineage>
</organism>
<evidence type="ECO:0000255" key="1">
    <source>
        <dbReference type="HAMAP-Rule" id="MF_00210"/>
    </source>
</evidence>
<gene>
    <name evidence="1" type="primary">aroA</name>
    <name type="ordered locus">CLL_A3142</name>
</gene>
<comment type="function">
    <text evidence="1">Catalyzes the transfer of the enolpyruvyl moiety of phosphoenolpyruvate (PEP) to the 5-hydroxyl of shikimate-3-phosphate (S3P) to produce enolpyruvyl shikimate-3-phosphate and inorganic phosphate.</text>
</comment>
<comment type="catalytic activity">
    <reaction evidence="1">
        <text>3-phosphoshikimate + phosphoenolpyruvate = 5-O-(1-carboxyvinyl)-3-phosphoshikimate + phosphate</text>
        <dbReference type="Rhea" id="RHEA:21256"/>
        <dbReference type="ChEBI" id="CHEBI:43474"/>
        <dbReference type="ChEBI" id="CHEBI:57701"/>
        <dbReference type="ChEBI" id="CHEBI:58702"/>
        <dbReference type="ChEBI" id="CHEBI:145989"/>
        <dbReference type="EC" id="2.5.1.19"/>
    </reaction>
    <physiologicalReaction direction="left-to-right" evidence="1">
        <dbReference type="Rhea" id="RHEA:21257"/>
    </physiologicalReaction>
</comment>
<comment type="pathway">
    <text evidence="1">Metabolic intermediate biosynthesis; chorismate biosynthesis; chorismate from D-erythrose 4-phosphate and phosphoenolpyruvate: step 6/7.</text>
</comment>
<comment type="subunit">
    <text evidence="1">Monomer.</text>
</comment>
<comment type="subcellular location">
    <subcellularLocation>
        <location evidence="1">Cytoplasm</location>
    </subcellularLocation>
</comment>
<comment type="similarity">
    <text evidence="1">Belongs to the EPSP synthase family.</text>
</comment>
<protein>
    <recommendedName>
        <fullName evidence="1">3-phosphoshikimate 1-carboxyvinyltransferase</fullName>
        <ecNumber evidence="1">2.5.1.19</ecNumber>
    </recommendedName>
    <alternativeName>
        <fullName evidence="1">5-enolpyruvylshikimate-3-phosphate synthase</fullName>
        <shortName evidence="1">EPSP synthase</shortName>
        <shortName evidence="1">EPSPS</shortName>
    </alternativeName>
</protein>